<keyword id="KW-0067">ATP-binding</keyword>
<keyword id="KW-0342">GTP-binding</keyword>
<keyword id="KW-0547">Nucleotide-binding</keyword>
<keyword id="KW-0694">RNA-binding</keyword>
<evidence type="ECO:0000255" key="1">
    <source>
        <dbReference type="HAMAP-Rule" id="MF_00636"/>
    </source>
</evidence>
<feature type="chain" id="PRO_0000259019" description="RNase adapter protein RapZ">
    <location>
        <begin position="1"/>
        <end position="284"/>
    </location>
</feature>
<feature type="region of interest" description="RNA-binding" evidence="1">
    <location>
        <begin position="266"/>
        <end position="284"/>
    </location>
</feature>
<feature type="binding site" evidence="1">
    <location>
        <begin position="8"/>
        <end position="15"/>
    </location>
    <ligand>
        <name>ATP</name>
        <dbReference type="ChEBI" id="CHEBI:30616"/>
    </ligand>
</feature>
<feature type="binding site" evidence="1">
    <location>
        <begin position="56"/>
        <end position="59"/>
    </location>
    <ligand>
        <name>GTP</name>
        <dbReference type="ChEBI" id="CHEBI:37565"/>
    </ligand>
</feature>
<comment type="function">
    <text evidence="1">Modulates the synthesis of GlmS, by affecting the processing and stability of the regulatory small RNA GlmZ. When glucosamine-6-phosphate (GlcN6P) concentrations are high in the cell, RapZ binds GlmZ and targets it to cleavage by RNase E. Consequently, GlmZ is inactivated and unable to activate GlmS synthesis. Under low GlcN6P concentrations, RapZ is sequestered and inactivated by an other regulatory small RNA, GlmY, preventing GlmZ degradation and leading to synthesis of GlmS.</text>
</comment>
<comment type="subunit">
    <text evidence="1">Homotrimer.</text>
</comment>
<comment type="similarity">
    <text evidence="1">Belongs to the RapZ-like family. RapZ subfamily.</text>
</comment>
<proteinExistence type="inferred from homology"/>
<dbReference type="EMBL" id="CP000308">
    <property type="protein sequence ID" value="ABG15679.1"/>
    <property type="molecule type" value="Genomic_DNA"/>
</dbReference>
<dbReference type="RefSeq" id="WP_002210113.1">
    <property type="nucleotide sequence ID" value="NZ_CP009906.1"/>
</dbReference>
<dbReference type="SMR" id="Q1C1J3"/>
<dbReference type="GeneID" id="96663019"/>
<dbReference type="KEGG" id="ypa:YPA_3717"/>
<dbReference type="Proteomes" id="UP000001971">
    <property type="component" value="Chromosome"/>
</dbReference>
<dbReference type="GO" id="GO:0005524">
    <property type="term" value="F:ATP binding"/>
    <property type="evidence" value="ECO:0007669"/>
    <property type="project" value="UniProtKB-UniRule"/>
</dbReference>
<dbReference type="GO" id="GO:0005525">
    <property type="term" value="F:GTP binding"/>
    <property type="evidence" value="ECO:0007669"/>
    <property type="project" value="UniProtKB-UniRule"/>
</dbReference>
<dbReference type="GO" id="GO:0003723">
    <property type="term" value="F:RNA binding"/>
    <property type="evidence" value="ECO:0007669"/>
    <property type="project" value="UniProtKB-KW"/>
</dbReference>
<dbReference type="HAMAP" id="MF_00636">
    <property type="entry name" value="RapZ_like"/>
    <property type="match status" value="1"/>
</dbReference>
<dbReference type="InterPro" id="IPR027417">
    <property type="entry name" value="P-loop_NTPase"/>
</dbReference>
<dbReference type="InterPro" id="IPR005337">
    <property type="entry name" value="RapZ-like"/>
</dbReference>
<dbReference type="InterPro" id="IPR053930">
    <property type="entry name" value="RapZ-like_N"/>
</dbReference>
<dbReference type="InterPro" id="IPR053931">
    <property type="entry name" value="RapZ_C"/>
</dbReference>
<dbReference type="NCBIfam" id="NF003828">
    <property type="entry name" value="PRK05416.1"/>
    <property type="match status" value="1"/>
</dbReference>
<dbReference type="PANTHER" id="PTHR30448">
    <property type="entry name" value="RNASE ADAPTER PROTEIN RAPZ"/>
    <property type="match status" value="1"/>
</dbReference>
<dbReference type="PANTHER" id="PTHR30448:SF0">
    <property type="entry name" value="RNASE ADAPTER PROTEIN RAPZ"/>
    <property type="match status" value="1"/>
</dbReference>
<dbReference type="Pfam" id="PF22740">
    <property type="entry name" value="PapZ_C"/>
    <property type="match status" value="1"/>
</dbReference>
<dbReference type="Pfam" id="PF03668">
    <property type="entry name" value="RapZ-like_N"/>
    <property type="match status" value="1"/>
</dbReference>
<dbReference type="PIRSF" id="PIRSF005052">
    <property type="entry name" value="P-loopkin"/>
    <property type="match status" value="1"/>
</dbReference>
<dbReference type="SUPFAM" id="SSF52540">
    <property type="entry name" value="P-loop containing nucleoside triphosphate hydrolases"/>
    <property type="match status" value="1"/>
</dbReference>
<organism>
    <name type="scientific">Yersinia pestis bv. Antiqua (strain Antiqua)</name>
    <dbReference type="NCBI Taxonomy" id="360102"/>
    <lineage>
        <taxon>Bacteria</taxon>
        <taxon>Pseudomonadati</taxon>
        <taxon>Pseudomonadota</taxon>
        <taxon>Gammaproteobacteria</taxon>
        <taxon>Enterobacterales</taxon>
        <taxon>Yersiniaceae</taxon>
        <taxon>Yersinia</taxon>
    </lineage>
</organism>
<name>RAPZ_YERPA</name>
<protein>
    <recommendedName>
        <fullName evidence="1">RNase adapter protein RapZ</fullName>
    </recommendedName>
</protein>
<reference key="1">
    <citation type="journal article" date="2006" name="J. Bacteriol.">
        <title>Complete genome sequence of Yersinia pestis strains Antiqua and Nepal516: evidence of gene reduction in an emerging pathogen.</title>
        <authorList>
            <person name="Chain P.S.G."/>
            <person name="Hu P."/>
            <person name="Malfatti S.A."/>
            <person name="Radnedge L."/>
            <person name="Larimer F."/>
            <person name="Vergez L.M."/>
            <person name="Worsham P."/>
            <person name="Chu M.C."/>
            <person name="Andersen G.L."/>
        </authorList>
    </citation>
    <scope>NUCLEOTIDE SEQUENCE [LARGE SCALE GENOMIC DNA]</scope>
    <source>
        <strain>Antiqua</strain>
    </source>
</reference>
<gene>
    <name evidence="1" type="primary">rapZ</name>
    <name type="ordered locus">YPA_3717</name>
</gene>
<accession>Q1C1J3</accession>
<sequence>MVLMIVSGRSGSGKSVALRALEDMGFYCVDNLPVVLLPQLASTLADRNISAAVSIDVRNMPESPEVFEHAMTQLPDSFSPQLLFLDADRNTLIRRYSDTRRLHPLSAKNLSLESAIDEESDLLEPLRSRADLIIDTSEMSVHELAEMLRTRLLGKRERELTMVFESFGFKHGIPIDADYVFDVRFLPNPHWDPKLRPMTGLDKPVISFLDRHTEVHNFIYQTRSYLEQWLPMLETNNRSYLTVAIGCTGGKHRSVYVAEQLADYFRARGKNVQSRHRTLEKRKQ</sequence>